<evidence type="ECO:0000255" key="1">
    <source>
        <dbReference type="HAMAP-Rule" id="MF_01619"/>
    </source>
</evidence>
<comment type="catalytic activity">
    <reaction evidence="1">
        <text>(S)-malate + NAD(+) = pyruvate + CO2 + NADH</text>
        <dbReference type="Rhea" id="RHEA:12653"/>
        <dbReference type="ChEBI" id="CHEBI:15361"/>
        <dbReference type="ChEBI" id="CHEBI:15589"/>
        <dbReference type="ChEBI" id="CHEBI:16526"/>
        <dbReference type="ChEBI" id="CHEBI:57540"/>
        <dbReference type="ChEBI" id="CHEBI:57945"/>
        <dbReference type="EC" id="1.1.1.38"/>
    </reaction>
</comment>
<comment type="catalytic activity">
    <reaction evidence="1">
        <text>oxaloacetate + H(+) = pyruvate + CO2</text>
        <dbReference type="Rhea" id="RHEA:15641"/>
        <dbReference type="ChEBI" id="CHEBI:15361"/>
        <dbReference type="ChEBI" id="CHEBI:15378"/>
        <dbReference type="ChEBI" id="CHEBI:16452"/>
        <dbReference type="ChEBI" id="CHEBI:16526"/>
        <dbReference type="EC" id="1.1.1.38"/>
    </reaction>
</comment>
<comment type="cofactor">
    <cofactor evidence="1">
        <name>Mg(2+)</name>
        <dbReference type="ChEBI" id="CHEBI:18420"/>
    </cofactor>
    <cofactor evidence="1">
        <name>Mn(2+)</name>
        <dbReference type="ChEBI" id="CHEBI:29035"/>
    </cofactor>
    <text evidence="1">Divalent metal cations. Prefers magnesium or manganese.</text>
</comment>
<comment type="subunit">
    <text evidence="1">Homotetramer.</text>
</comment>
<comment type="similarity">
    <text evidence="1">Belongs to the malic enzymes family.</text>
</comment>
<proteinExistence type="inferred from homology"/>
<dbReference type="EC" id="1.1.1.38" evidence="1"/>
<dbReference type="EMBL" id="CP001139">
    <property type="protein sequence ID" value="ACH66955.1"/>
    <property type="molecule type" value="Genomic_DNA"/>
</dbReference>
<dbReference type="RefSeq" id="WP_012534095.1">
    <property type="nucleotide sequence ID" value="NC_011184.1"/>
</dbReference>
<dbReference type="SMR" id="B5FEY5"/>
<dbReference type="KEGG" id="vfm:VFMJ11_1654"/>
<dbReference type="HOGENOM" id="CLU_011405_5_2_6"/>
<dbReference type="Proteomes" id="UP000001857">
    <property type="component" value="Chromosome I"/>
</dbReference>
<dbReference type="GO" id="GO:0005829">
    <property type="term" value="C:cytosol"/>
    <property type="evidence" value="ECO:0007669"/>
    <property type="project" value="TreeGrafter"/>
</dbReference>
<dbReference type="GO" id="GO:0004471">
    <property type="term" value="F:malate dehydrogenase (decarboxylating) (NAD+) activity"/>
    <property type="evidence" value="ECO:0007669"/>
    <property type="project" value="UniProtKB-UniRule"/>
</dbReference>
<dbReference type="GO" id="GO:0046872">
    <property type="term" value="F:metal ion binding"/>
    <property type="evidence" value="ECO:0007669"/>
    <property type="project" value="UniProtKB-KW"/>
</dbReference>
<dbReference type="GO" id="GO:0051287">
    <property type="term" value="F:NAD binding"/>
    <property type="evidence" value="ECO:0007669"/>
    <property type="project" value="InterPro"/>
</dbReference>
<dbReference type="GO" id="GO:0008948">
    <property type="term" value="F:oxaloacetate decarboxylase activity"/>
    <property type="evidence" value="ECO:0007669"/>
    <property type="project" value="UniProtKB-UniRule"/>
</dbReference>
<dbReference type="GO" id="GO:0006108">
    <property type="term" value="P:malate metabolic process"/>
    <property type="evidence" value="ECO:0007669"/>
    <property type="project" value="TreeGrafter"/>
</dbReference>
<dbReference type="CDD" id="cd05312">
    <property type="entry name" value="NAD_bind_1_malic_enz"/>
    <property type="match status" value="1"/>
</dbReference>
<dbReference type="FunFam" id="3.40.50.10380:FF:000001">
    <property type="entry name" value="NAD-dependent malic enzyme"/>
    <property type="match status" value="1"/>
</dbReference>
<dbReference type="FunFam" id="3.40.50.720:FF:000055">
    <property type="entry name" value="NAD-dependent malic enzyme"/>
    <property type="match status" value="1"/>
</dbReference>
<dbReference type="Gene3D" id="3.40.50.10380">
    <property type="entry name" value="Malic enzyme, N-terminal domain"/>
    <property type="match status" value="1"/>
</dbReference>
<dbReference type="Gene3D" id="3.40.50.720">
    <property type="entry name" value="NAD(P)-binding Rossmann-like Domain"/>
    <property type="match status" value="1"/>
</dbReference>
<dbReference type="HAMAP" id="MF_01619">
    <property type="entry name" value="NAD_malic_enz"/>
    <property type="match status" value="1"/>
</dbReference>
<dbReference type="InterPro" id="IPR046346">
    <property type="entry name" value="Aminoacid_DH-like_N_sf"/>
</dbReference>
<dbReference type="InterPro" id="IPR015884">
    <property type="entry name" value="Malic_enzyme_CS"/>
</dbReference>
<dbReference type="InterPro" id="IPR012301">
    <property type="entry name" value="Malic_N_dom"/>
</dbReference>
<dbReference type="InterPro" id="IPR037062">
    <property type="entry name" value="Malic_N_dom_sf"/>
</dbReference>
<dbReference type="InterPro" id="IPR012302">
    <property type="entry name" value="Malic_NAD-bd"/>
</dbReference>
<dbReference type="InterPro" id="IPR001891">
    <property type="entry name" value="Malic_OxRdtase"/>
</dbReference>
<dbReference type="InterPro" id="IPR036291">
    <property type="entry name" value="NAD(P)-bd_dom_sf"/>
</dbReference>
<dbReference type="InterPro" id="IPR023667">
    <property type="entry name" value="NAD_malic_enz_proteobac"/>
</dbReference>
<dbReference type="NCBIfam" id="NF010052">
    <property type="entry name" value="PRK13529.1"/>
    <property type="match status" value="1"/>
</dbReference>
<dbReference type="PANTHER" id="PTHR23406">
    <property type="entry name" value="MALIC ENZYME-RELATED"/>
    <property type="match status" value="1"/>
</dbReference>
<dbReference type="PANTHER" id="PTHR23406:SF34">
    <property type="entry name" value="NAD-DEPENDENT MALIC ENZYME, MITOCHONDRIAL"/>
    <property type="match status" value="1"/>
</dbReference>
<dbReference type="Pfam" id="PF00390">
    <property type="entry name" value="malic"/>
    <property type="match status" value="1"/>
</dbReference>
<dbReference type="Pfam" id="PF03949">
    <property type="entry name" value="Malic_M"/>
    <property type="match status" value="1"/>
</dbReference>
<dbReference type="PIRSF" id="PIRSF000106">
    <property type="entry name" value="ME"/>
    <property type="match status" value="1"/>
</dbReference>
<dbReference type="PRINTS" id="PR00072">
    <property type="entry name" value="MALOXRDTASE"/>
</dbReference>
<dbReference type="SMART" id="SM01274">
    <property type="entry name" value="malic"/>
    <property type="match status" value="1"/>
</dbReference>
<dbReference type="SMART" id="SM00919">
    <property type="entry name" value="Malic_M"/>
    <property type="match status" value="1"/>
</dbReference>
<dbReference type="SUPFAM" id="SSF53223">
    <property type="entry name" value="Aminoacid dehydrogenase-like, N-terminal domain"/>
    <property type="match status" value="1"/>
</dbReference>
<dbReference type="SUPFAM" id="SSF51735">
    <property type="entry name" value="NAD(P)-binding Rossmann-fold domains"/>
    <property type="match status" value="1"/>
</dbReference>
<dbReference type="PROSITE" id="PS00331">
    <property type="entry name" value="MALIC_ENZYMES"/>
    <property type="match status" value="1"/>
</dbReference>
<gene>
    <name evidence="1" type="primary">maeA</name>
    <name type="ordered locus">VFMJ11_1654</name>
</gene>
<name>MAO1_ALIFM</name>
<protein>
    <recommendedName>
        <fullName evidence="1">NAD-dependent malic enzyme</fullName>
        <shortName evidence="1">NAD-ME</shortName>
        <ecNumber evidence="1">1.1.1.38</ecNumber>
    </recommendedName>
</protein>
<keyword id="KW-0479">Metal-binding</keyword>
<keyword id="KW-0520">NAD</keyword>
<keyword id="KW-0560">Oxidoreductase</keyword>
<accession>B5FEY5</accession>
<sequence length="562" mass="62287">MNNNKRPLYIPYAGPALLSTPLLNKGSAFSTTERKYFNLEGLLPEAIESIEEQTGRAYKQYQSFENDMDKHIYLRNIQDTNETLFYRLVQNHISEMMPIIYTPTVGAACENFSNIYRRGRGLFISYENKNRIDDLLNNAANQNVKVIVVTDGERILGLGDQGIGGMGIPIGKLALYTACGGISPAHTLPIVLDVGTNNPQRLADPMYMGWRHPRVTGDEYADFVEDFIQAVQRRWPEALVQFEDFAQKNAMPLLERYKNRICCFNDDIQGTAAVTVGSLLAACKAAGSSLSEQRVTFLGAGSAGCGIAEAIIAQMVSEGISDAQARSQVYMVDRWGLLQEGMPNLLDFQQRLVQKAENTKDWISEEPNFSLVDVMRNAKPTVLIGVSGAPGLFSKEVIQEMHKHCERPIVFPLSNPTSRVEATPNDIIRWTNGQALVATGSPFDPVSHNGQTYPIAQCNNSFIFPGIGLGVLAIKATRVTDEMLMESSRALAECSPLAINGTGALLPPLEEIHSVSKRIAFAVAKKAIEQGHALEITDEALHQKIESYFWKPVYRRYKRTAF</sequence>
<organism>
    <name type="scientific">Aliivibrio fischeri (strain MJ11)</name>
    <name type="common">Vibrio fischeri</name>
    <dbReference type="NCBI Taxonomy" id="388396"/>
    <lineage>
        <taxon>Bacteria</taxon>
        <taxon>Pseudomonadati</taxon>
        <taxon>Pseudomonadota</taxon>
        <taxon>Gammaproteobacteria</taxon>
        <taxon>Vibrionales</taxon>
        <taxon>Vibrionaceae</taxon>
        <taxon>Aliivibrio</taxon>
    </lineage>
</organism>
<feature type="chain" id="PRO_1000186014" description="NAD-dependent malic enzyme">
    <location>
        <begin position="1"/>
        <end position="562"/>
    </location>
</feature>
<feature type="active site" description="Proton donor" evidence="1">
    <location>
        <position position="101"/>
    </location>
</feature>
<feature type="active site" description="Proton acceptor" evidence="1">
    <location>
        <position position="172"/>
    </location>
</feature>
<feature type="binding site" evidence="1">
    <location>
        <position position="154"/>
    </location>
    <ligand>
        <name>NAD(+)</name>
        <dbReference type="ChEBI" id="CHEBI:57540"/>
    </ligand>
</feature>
<feature type="binding site" evidence="1">
    <location>
        <position position="243"/>
    </location>
    <ligand>
        <name>a divalent metal cation</name>
        <dbReference type="ChEBI" id="CHEBI:60240"/>
    </ligand>
</feature>
<feature type="binding site" evidence="1">
    <location>
        <position position="244"/>
    </location>
    <ligand>
        <name>a divalent metal cation</name>
        <dbReference type="ChEBI" id="CHEBI:60240"/>
    </ligand>
</feature>
<feature type="binding site" evidence="1">
    <location>
        <position position="267"/>
    </location>
    <ligand>
        <name>a divalent metal cation</name>
        <dbReference type="ChEBI" id="CHEBI:60240"/>
    </ligand>
</feature>
<feature type="binding site" evidence="1">
    <location>
        <position position="267"/>
    </location>
    <ligand>
        <name>NAD(+)</name>
        <dbReference type="ChEBI" id="CHEBI:57540"/>
    </ligand>
</feature>
<feature type="binding site" evidence="1">
    <location>
        <position position="415"/>
    </location>
    <ligand>
        <name>NAD(+)</name>
        <dbReference type="ChEBI" id="CHEBI:57540"/>
    </ligand>
</feature>
<feature type="site" description="Important for activity" evidence="1">
    <location>
        <position position="267"/>
    </location>
</feature>
<reference key="1">
    <citation type="submission" date="2008-08" db="EMBL/GenBank/DDBJ databases">
        <title>Complete sequence of Vibrio fischeri strain MJ11.</title>
        <authorList>
            <person name="Mandel M.J."/>
            <person name="Stabb E.V."/>
            <person name="Ruby E.G."/>
            <person name="Ferriera S."/>
            <person name="Johnson J."/>
            <person name="Kravitz S."/>
            <person name="Beeson K."/>
            <person name="Sutton G."/>
            <person name="Rogers Y.-H."/>
            <person name="Friedman R."/>
            <person name="Frazier M."/>
            <person name="Venter J.C."/>
        </authorList>
    </citation>
    <scope>NUCLEOTIDE SEQUENCE [LARGE SCALE GENOMIC DNA]</scope>
    <source>
        <strain>MJ11</strain>
    </source>
</reference>